<accession>Q6CPG3</accession>
<name>RS29_KLULA</name>
<comment type="similarity">
    <text evidence="1">Belongs to the universal ribosomal protein uS14 family.</text>
</comment>
<reference key="1">
    <citation type="journal article" date="2004" name="Nature">
        <title>Genome evolution in yeasts.</title>
        <authorList>
            <person name="Dujon B."/>
            <person name="Sherman D."/>
            <person name="Fischer G."/>
            <person name="Durrens P."/>
            <person name="Casaregola S."/>
            <person name="Lafontaine I."/>
            <person name="de Montigny J."/>
            <person name="Marck C."/>
            <person name="Neuveglise C."/>
            <person name="Talla E."/>
            <person name="Goffard N."/>
            <person name="Frangeul L."/>
            <person name="Aigle M."/>
            <person name="Anthouard V."/>
            <person name="Babour A."/>
            <person name="Barbe V."/>
            <person name="Barnay S."/>
            <person name="Blanchin S."/>
            <person name="Beckerich J.-M."/>
            <person name="Beyne E."/>
            <person name="Bleykasten C."/>
            <person name="Boisrame A."/>
            <person name="Boyer J."/>
            <person name="Cattolico L."/>
            <person name="Confanioleri F."/>
            <person name="de Daruvar A."/>
            <person name="Despons L."/>
            <person name="Fabre E."/>
            <person name="Fairhead C."/>
            <person name="Ferry-Dumazet H."/>
            <person name="Groppi A."/>
            <person name="Hantraye F."/>
            <person name="Hennequin C."/>
            <person name="Jauniaux N."/>
            <person name="Joyet P."/>
            <person name="Kachouri R."/>
            <person name="Kerrest A."/>
            <person name="Koszul R."/>
            <person name="Lemaire M."/>
            <person name="Lesur I."/>
            <person name="Ma L."/>
            <person name="Muller H."/>
            <person name="Nicaud J.-M."/>
            <person name="Nikolski M."/>
            <person name="Oztas S."/>
            <person name="Ozier-Kalogeropoulos O."/>
            <person name="Pellenz S."/>
            <person name="Potier S."/>
            <person name="Richard G.-F."/>
            <person name="Straub M.-L."/>
            <person name="Suleau A."/>
            <person name="Swennen D."/>
            <person name="Tekaia F."/>
            <person name="Wesolowski-Louvel M."/>
            <person name="Westhof E."/>
            <person name="Wirth B."/>
            <person name="Zeniou-Meyer M."/>
            <person name="Zivanovic Y."/>
            <person name="Bolotin-Fukuhara M."/>
            <person name="Thierry A."/>
            <person name="Bouchier C."/>
            <person name="Caudron B."/>
            <person name="Scarpelli C."/>
            <person name="Gaillardin C."/>
            <person name="Weissenbach J."/>
            <person name="Wincker P."/>
            <person name="Souciet J.-L."/>
        </authorList>
    </citation>
    <scope>NUCLEOTIDE SEQUENCE [LARGE SCALE GENOMIC DNA]</scope>
    <source>
        <strain>ATCC 8585 / CBS 2359 / DSM 70799 / NBRC 1267 / NRRL Y-1140 / WM37</strain>
    </source>
</reference>
<feature type="chain" id="PRO_0000268813" description="Small ribosomal subunit protein uS14">
    <location>
        <begin position="1"/>
        <end position="56"/>
    </location>
</feature>
<feature type="turn" evidence="2">
    <location>
        <begin position="4"/>
        <end position="8"/>
    </location>
</feature>
<feature type="strand" evidence="2">
    <location>
        <begin position="13"/>
        <end position="15"/>
    </location>
</feature>
<feature type="helix" evidence="2">
    <location>
        <begin position="16"/>
        <end position="18"/>
    </location>
</feature>
<feature type="strand" evidence="2">
    <location>
        <begin position="22"/>
        <end position="24"/>
    </location>
</feature>
<feature type="strand" evidence="2">
    <location>
        <begin position="28"/>
        <end position="31"/>
    </location>
</feature>
<feature type="helix" evidence="2">
    <location>
        <begin position="33"/>
        <end position="35"/>
    </location>
</feature>
<feature type="helix" evidence="2">
    <location>
        <begin position="40"/>
        <end position="50"/>
    </location>
</feature>
<proteinExistence type="evidence at protein level"/>
<organism>
    <name type="scientific">Kluyveromyces lactis (strain ATCC 8585 / CBS 2359 / DSM 70799 / NBRC 1267 / NRRL Y-1140 / WM37)</name>
    <name type="common">Yeast</name>
    <name type="synonym">Candida sphaerica</name>
    <dbReference type="NCBI Taxonomy" id="284590"/>
    <lineage>
        <taxon>Eukaryota</taxon>
        <taxon>Fungi</taxon>
        <taxon>Dikarya</taxon>
        <taxon>Ascomycota</taxon>
        <taxon>Saccharomycotina</taxon>
        <taxon>Saccharomycetes</taxon>
        <taxon>Saccharomycetales</taxon>
        <taxon>Saccharomycetaceae</taxon>
        <taxon>Kluyveromyces</taxon>
    </lineage>
</organism>
<evidence type="ECO:0000305" key="1"/>
<evidence type="ECO:0007829" key="2">
    <source>
        <dbReference type="PDB" id="8RW1"/>
    </source>
</evidence>
<gene>
    <name type="primary">RPS29</name>
    <name type="ordered locus">KLLA0E05071g</name>
</gene>
<sequence>MAHENVWYSHPRKFGKGSRQCRISGSHSGLIRKYGLNIDRQSFREKANDIGFYKYR</sequence>
<keyword id="KW-0002">3D-structure</keyword>
<keyword id="KW-1185">Reference proteome</keyword>
<keyword id="KW-0687">Ribonucleoprotein</keyword>
<keyword id="KW-0689">Ribosomal protein</keyword>
<protein>
    <recommendedName>
        <fullName evidence="1">Small ribosomal subunit protein uS14</fullName>
    </recommendedName>
    <alternativeName>
        <fullName>40S ribosomal protein S29</fullName>
    </alternativeName>
</protein>
<dbReference type="EMBL" id="CR382125">
    <property type="protein sequence ID" value="CAG99263.1"/>
    <property type="molecule type" value="Genomic_DNA"/>
</dbReference>
<dbReference type="RefSeq" id="XP_454176.1">
    <property type="nucleotide sequence ID" value="XM_454176.1"/>
</dbReference>
<dbReference type="PDB" id="3J80">
    <property type="method" value="EM"/>
    <property type="resolution" value="3.75 A"/>
    <property type="chains" value="d=1-56"/>
</dbReference>
<dbReference type="PDB" id="3J81">
    <property type="method" value="EM"/>
    <property type="resolution" value="4.00 A"/>
    <property type="chains" value="d=1-56"/>
</dbReference>
<dbReference type="PDB" id="3JAM">
    <property type="method" value="EM"/>
    <property type="resolution" value="3.46 A"/>
    <property type="chains" value="d=1-56"/>
</dbReference>
<dbReference type="PDB" id="3JAP">
    <property type="method" value="EM"/>
    <property type="resolution" value="4.90 A"/>
    <property type="chains" value="d=1-56"/>
</dbReference>
<dbReference type="PDB" id="5IT7">
    <property type="method" value="EM"/>
    <property type="resolution" value="3.60 A"/>
    <property type="chains" value="d=4-56"/>
</dbReference>
<dbReference type="PDB" id="5IT9">
    <property type="method" value="EM"/>
    <property type="resolution" value="3.80 A"/>
    <property type="chains" value="d=4-56"/>
</dbReference>
<dbReference type="PDB" id="6FYX">
    <property type="method" value="EM"/>
    <property type="resolution" value="3.05 A"/>
    <property type="chains" value="d=1-56"/>
</dbReference>
<dbReference type="PDB" id="6FYY">
    <property type="method" value="EM"/>
    <property type="resolution" value="3.05 A"/>
    <property type="chains" value="d=1-56"/>
</dbReference>
<dbReference type="PDB" id="6GSM">
    <property type="method" value="EM"/>
    <property type="resolution" value="5.15 A"/>
    <property type="chains" value="d=4-56"/>
</dbReference>
<dbReference type="PDB" id="6GSN">
    <property type="method" value="EM"/>
    <property type="resolution" value="5.75 A"/>
    <property type="chains" value="d=4-56"/>
</dbReference>
<dbReference type="PDB" id="6UZ7">
    <property type="method" value="EM"/>
    <property type="resolution" value="3.60 A"/>
    <property type="chains" value="d=1-56"/>
</dbReference>
<dbReference type="PDB" id="8I7J">
    <property type="method" value="EM"/>
    <property type="resolution" value="4.60 A"/>
    <property type="chains" value="d=1-56"/>
</dbReference>
<dbReference type="PDB" id="8RW1">
    <property type="method" value="EM"/>
    <property type="resolution" value="3.35 A"/>
    <property type="chains" value="d=1-56"/>
</dbReference>
<dbReference type="PDB" id="8S8D">
    <property type="method" value="EM"/>
    <property type="resolution" value="3.45 A"/>
    <property type="chains" value="d=1-56"/>
</dbReference>
<dbReference type="PDB" id="8S8E">
    <property type="method" value="EM"/>
    <property type="resolution" value="3.85 A"/>
    <property type="chains" value="d=1-56"/>
</dbReference>
<dbReference type="PDB" id="8S8F">
    <property type="method" value="EM"/>
    <property type="resolution" value="3.95 A"/>
    <property type="chains" value="d=1-56"/>
</dbReference>
<dbReference type="PDB" id="8S8G">
    <property type="method" value="EM"/>
    <property type="resolution" value="4.00 A"/>
    <property type="chains" value="d=1-56"/>
</dbReference>
<dbReference type="PDB" id="8S8H">
    <property type="method" value="EM"/>
    <property type="resolution" value="4.00 A"/>
    <property type="chains" value="d=1-56"/>
</dbReference>
<dbReference type="PDB" id="8S8I">
    <property type="method" value="EM"/>
    <property type="resolution" value="4.30 A"/>
    <property type="chains" value="d=1-56"/>
</dbReference>
<dbReference type="PDB" id="8S8J">
    <property type="method" value="EM"/>
    <property type="resolution" value="4.70 A"/>
    <property type="chains" value="d=1-56"/>
</dbReference>
<dbReference type="PDB" id="8S8K">
    <property type="method" value="EM"/>
    <property type="resolution" value="4.00 A"/>
    <property type="chains" value="d=1-56"/>
</dbReference>
<dbReference type="PDBsum" id="3J80"/>
<dbReference type="PDBsum" id="3J81"/>
<dbReference type="PDBsum" id="3JAM"/>
<dbReference type="PDBsum" id="3JAP"/>
<dbReference type="PDBsum" id="5IT7"/>
<dbReference type="PDBsum" id="5IT9"/>
<dbReference type="PDBsum" id="6FYX"/>
<dbReference type="PDBsum" id="6FYY"/>
<dbReference type="PDBsum" id="6GSM"/>
<dbReference type="PDBsum" id="6GSN"/>
<dbReference type="PDBsum" id="6UZ7"/>
<dbReference type="PDBsum" id="8I7J"/>
<dbReference type="PDBsum" id="8RW1"/>
<dbReference type="PDBsum" id="8S8D"/>
<dbReference type="PDBsum" id="8S8E"/>
<dbReference type="PDBsum" id="8S8F"/>
<dbReference type="PDBsum" id="8S8G"/>
<dbReference type="PDBsum" id="8S8H"/>
<dbReference type="PDBsum" id="8S8I"/>
<dbReference type="PDBsum" id="8S8J"/>
<dbReference type="PDBsum" id="8S8K"/>
<dbReference type="EMDB" id="EMD-0057"/>
<dbReference type="EMDB" id="EMD-0058"/>
<dbReference type="EMDB" id="EMD-19541"/>
<dbReference type="EMDB" id="EMD-19801"/>
<dbReference type="EMDB" id="EMD-19802"/>
<dbReference type="EMDB" id="EMD-19803"/>
<dbReference type="EMDB" id="EMD-19804"/>
<dbReference type="EMDB" id="EMD-19805"/>
<dbReference type="EMDB" id="EMD-19806"/>
<dbReference type="EMDB" id="EMD-19807"/>
<dbReference type="EMDB" id="EMD-19808"/>
<dbReference type="EMDB" id="EMD-20952"/>
<dbReference type="EMDB" id="EMD-35216"/>
<dbReference type="EMDB" id="EMD-4327"/>
<dbReference type="EMDB" id="EMD-4328"/>
<dbReference type="EMDB" id="EMD-8123"/>
<dbReference type="EMDB" id="EMD-8124"/>
<dbReference type="SMR" id="Q6CPG3"/>
<dbReference type="FunCoup" id="Q6CPG3">
    <property type="interactions" value="809"/>
</dbReference>
<dbReference type="STRING" id="284590.Q6CPG3"/>
<dbReference type="PaxDb" id="284590-Q6CPG3"/>
<dbReference type="KEGG" id="kla:KLLA0_E05127g"/>
<dbReference type="eggNOG" id="KOG3506">
    <property type="taxonomic scope" value="Eukaryota"/>
</dbReference>
<dbReference type="HOGENOM" id="CLU_177289_1_1_1"/>
<dbReference type="InParanoid" id="Q6CPG3"/>
<dbReference type="OMA" id="NDVWNSH"/>
<dbReference type="EvolutionaryTrace" id="Q6CPG3"/>
<dbReference type="Proteomes" id="UP000000598">
    <property type="component" value="Chromosome E"/>
</dbReference>
<dbReference type="GO" id="GO:0022627">
    <property type="term" value="C:cytosolic small ribosomal subunit"/>
    <property type="evidence" value="ECO:0007669"/>
    <property type="project" value="TreeGrafter"/>
</dbReference>
<dbReference type="GO" id="GO:0003735">
    <property type="term" value="F:structural constituent of ribosome"/>
    <property type="evidence" value="ECO:0007669"/>
    <property type="project" value="InterPro"/>
</dbReference>
<dbReference type="GO" id="GO:0008270">
    <property type="term" value="F:zinc ion binding"/>
    <property type="evidence" value="ECO:0007669"/>
    <property type="project" value="InterPro"/>
</dbReference>
<dbReference type="GO" id="GO:0002181">
    <property type="term" value="P:cytoplasmic translation"/>
    <property type="evidence" value="ECO:0007669"/>
    <property type="project" value="TreeGrafter"/>
</dbReference>
<dbReference type="FunFam" id="4.10.830.10:FF:000002">
    <property type="entry name" value="40S ribosomal protein S29"/>
    <property type="match status" value="1"/>
</dbReference>
<dbReference type="Gene3D" id="4.10.830.10">
    <property type="entry name" value="30s Ribosomal Protein S14, Chain N"/>
    <property type="match status" value="1"/>
</dbReference>
<dbReference type="InterPro" id="IPR001209">
    <property type="entry name" value="Ribosomal_uS14"/>
</dbReference>
<dbReference type="InterPro" id="IPR039744">
    <property type="entry name" value="RIbosomal_uS14_euk_arc"/>
</dbReference>
<dbReference type="InterPro" id="IPR043140">
    <property type="entry name" value="Ribosomal_uS14_sf"/>
</dbReference>
<dbReference type="NCBIfam" id="NF004424">
    <property type="entry name" value="PRK05766.1"/>
    <property type="match status" value="1"/>
</dbReference>
<dbReference type="PANTHER" id="PTHR12010">
    <property type="entry name" value="40S RIBOSOMAL PROTEIN S29"/>
    <property type="match status" value="1"/>
</dbReference>
<dbReference type="PANTHER" id="PTHR12010:SF2">
    <property type="entry name" value="40S RIBOSOMAL PROTEIN S29"/>
    <property type="match status" value="1"/>
</dbReference>
<dbReference type="Pfam" id="PF00253">
    <property type="entry name" value="Ribosomal_S14"/>
    <property type="match status" value="1"/>
</dbReference>